<proteinExistence type="inferred from homology"/>
<dbReference type="EMBL" id="DP000567">
    <property type="protein sequence ID" value="ABY79117.1"/>
    <property type="molecule type" value="Genomic_DNA"/>
</dbReference>
<dbReference type="SMR" id="B0KW94"/>
<dbReference type="STRING" id="9483.ENSCJAP00000000618"/>
<dbReference type="KEGG" id="cjc:100394558"/>
<dbReference type="eggNOG" id="KOG1628">
    <property type="taxonomic scope" value="Eukaryota"/>
</dbReference>
<dbReference type="InParanoid" id="B0KW94"/>
<dbReference type="OrthoDB" id="9819960at2759"/>
<dbReference type="Proteomes" id="UP000008225">
    <property type="component" value="Unplaced"/>
</dbReference>
<dbReference type="GO" id="GO:0022627">
    <property type="term" value="C:cytosolic small ribosomal subunit"/>
    <property type="evidence" value="ECO:0007669"/>
    <property type="project" value="UniProtKB-UniRule"/>
</dbReference>
<dbReference type="GO" id="GO:0005730">
    <property type="term" value="C:nucleolus"/>
    <property type="evidence" value="ECO:0007669"/>
    <property type="project" value="UniProtKB-SubCell"/>
</dbReference>
<dbReference type="GO" id="GO:0032040">
    <property type="term" value="C:small-subunit processome"/>
    <property type="evidence" value="ECO:0000250"/>
    <property type="project" value="UniProtKB"/>
</dbReference>
<dbReference type="GO" id="GO:0003735">
    <property type="term" value="F:structural constituent of ribosome"/>
    <property type="evidence" value="ECO:0007669"/>
    <property type="project" value="UniProtKB-UniRule"/>
</dbReference>
<dbReference type="GO" id="GO:0030154">
    <property type="term" value="P:cell differentiation"/>
    <property type="evidence" value="ECO:0007669"/>
    <property type="project" value="UniProtKB-KW"/>
</dbReference>
<dbReference type="GO" id="GO:0042274">
    <property type="term" value="P:ribosomal small subunit biogenesis"/>
    <property type="evidence" value="ECO:0000250"/>
    <property type="project" value="UniProtKB"/>
</dbReference>
<dbReference type="GO" id="GO:0006412">
    <property type="term" value="P:translation"/>
    <property type="evidence" value="ECO:0007669"/>
    <property type="project" value="UniProtKB-UniRule"/>
</dbReference>
<dbReference type="HAMAP" id="MF_03122">
    <property type="entry name" value="Ribosomal_eS1_euk"/>
    <property type="match status" value="1"/>
</dbReference>
<dbReference type="InterPro" id="IPR001593">
    <property type="entry name" value="Ribosomal_eS1"/>
</dbReference>
<dbReference type="InterPro" id="IPR027500">
    <property type="entry name" value="Ribosomal_eS1_euk"/>
</dbReference>
<dbReference type="PANTHER" id="PTHR11830">
    <property type="entry name" value="40S RIBOSOMAL PROTEIN S3A"/>
    <property type="match status" value="1"/>
</dbReference>
<dbReference type="Pfam" id="PF01015">
    <property type="entry name" value="Ribosomal_S3Ae"/>
    <property type="match status" value="1"/>
</dbReference>
<dbReference type="SMART" id="SM01397">
    <property type="entry name" value="Ribosomal_S3Ae"/>
    <property type="match status" value="1"/>
</dbReference>
<evidence type="ECO:0000250" key="1">
    <source>
        <dbReference type="UniProtKB" id="P61247"/>
    </source>
</evidence>
<evidence type="ECO:0000250" key="2">
    <source>
        <dbReference type="UniProtKB" id="P97351"/>
    </source>
</evidence>
<evidence type="ECO:0000255" key="3">
    <source>
        <dbReference type="HAMAP-Rule" id="MF_03122"/>
    </source>
</evidence>
<evidence type="ECO:0000256" key="4">
    <source>
        <dbReference type="SAM" id="MobiDB-lite"/>
    </source>
</evidence>
<evidence type="ECO:0000305" key="5"/>
<protein>
    <recommendedName>
        <fullName evidence="3">Small ribosomal subunit protein eS1</fullName>
    </recommendedName>
    <alternativeName>
        <fullName evidence="5">40S ribosomal protein S3a</fullName>
    </alternativeName>
</protein>
<sequence>MAVGKNKRLTKGGKKGAKKKVVDPFSKKDWYDVKAPAMFNIRNIGKTLVTRTQGTKIASDGLKGRVFEVSLADFQNDEVAFRKFKLITEDVQGKNCLTNFHGMDLTRDKMCSMVKKWQTMIEAHVDVKTTDGYLLRLFCVGFTKKHNNQIRKTSYAQHQQVCQIRKKMMEIMTREVQTNDLKEVVNKLIPDSIGKDIEKACQSIYPLHDVFVRKVKMLKIPKFELGKLMELHGEGSSSGKATGDETGAKVERADGYEPPVQESV</sequence>
<accession>B0KW94</accession>
<gene>
    <name evidence="3" type="primary">RPS3A</name>
</gene>
<name>RS3A_CALJA</name>
<organism>
    <name type="scientific">Callithrix jacchus</name>
    <name type="common">White-tufted-ear marmoset</name>
    <dbReference type="NCBI Taxonomy" id="9483"/>
    <lineage>
        <taxon>Eukaryota</taxon>
        <taxon>Metazoa</taxon>
        <taxon>Chordata</taxon>
        <taxon>Craniata</taxon>
        <taxon>Vertebrata</taxon>
        <taxon>Euteleostomi</taxon>
        <taxon>Mammalia</taxon>
        <taxon>Eutheria</taxon>
        <taxon>Euarchontoglires</taxon>
        <taxon>Primates</taxon>
        <taxon>Haplorrhini</taxon>
        <taxon>Platyrrhini</taxon>
        <taxon>Cebidae</taxon>
        <taxon>Callitrichinae</taxon>
        <taxon>Callithrix</taxon>
        <taxon>Callithrix</taxon>
    </lineage>
</organism>
<keyword id="KW-0007">Acetylation</keyword>
<keyword id="KW-0013">ADP-ribosylation</keyword>
<keyword id="KW-0963">Cytoplasm</keyword>
<keyword id="KW-0221">Differentiation</keyword>
<keyword id="KW-1017">Isopeptide bond</keyword>
<keyword id="KW-0539">Nucleus</keyword>
<keyword id="KW-0597">Phosphoprotein</keyword>
<keyword id="KW-1185">Reference proteome</keyword>
<keyword id="KW-0687">Ribonucleoprotein</keyword>
<keyword id="KW-0689">Ribosomal protein</keyword>
<keyword id="KW-0832">Ubl conjugation</keyword>
<feature type="chain" id="PRO_0000389294" description="Small ribosomal subunit protein eS1">
    <location>
        <begin position="1"/>
        <end position="264"/>
    </location>
</feature>
<feature type="region of interest" description="Disordered" evidence="4">
    <location>
        <begin position="233"/>
        <end position="264"/>
    </location>
</feature>
<feature type="compositionally biased region" description="Basic and acidic residues" evidence="4">
    <location>
        <begin position="242"/>
        <end position="255"/>
    </location>
</feature>
<feature type="modified residue" description="N6-acetyllysine; alternate" evidence="1">
    <location>
        <position position="34"/>
    </location>
</feature>
<feature type="modified residue" description="N6-acetyllysine" evidence="2">
    <location>
        <position position="56"/>
    </location>
</feature>
<feature type="modified residue" description="ADP-ribosyltyrosine" evidence="1">
    <location>
        <position position="155"/>
    </location>
</feature>
<feature type="modified residue" description="Phosphoserine" evidence="1">
    <location>
        <position position="236"/>
    </location>
</feature>
<feature type="modified residue" description="Phosphoserine" evidence="2">
    <location>
        <position position="237"/>
    </location>
</feature>
<feature type="modified residue" description="N6-acetyllysine; alternate" evidence="1">
    <location>
        <position position="249"/>
    </location>
</feature>
<feature type="modified residue" description="Phosphotyrosine" evidence="1">
    <location>
        <position position="256"/>
    </location>
</feature>
<feature type="modified residue" description="Phosphoserine" evidence="1">
    <location>
        <position position="263"/>
    </location>
</feature>
<feature type="cross-link" description="Glycyl lysine isopeptide (Lys-Gly) (interchain with G-Cter in SUMO2); alternate" evidence="1">
    <location>
        <position position="34"/>
    </location>
</feature>
<feature type="cross-link" description="Glycyl lysine isopeptide (Lys-Gly) (interchain with G-Cter in SUMO2); alternate" evidence="1">
    <location>
        <position position="249"/>
    </location>
</feature>
<comment type="function">
    <text evidence="1 3">Component of the small ribosomal subunit. The ribosome is a large ribonucleoprotein complex responsible for the synthesis of proteins in the cell. Part of the small subunit (SSU) processome, first precursor of the small eukaryotic ribosomal subunit. During the assembly of the SSU processome in the nucleolus, many ribosome biogenesis factors, an RNA chaperone and ribosomal proteins associate with the nascent pre-rRNA and work in concert to generate RNA folding, modifications, rearrangements and cleavage as well as targeted degradation of pre-ribosomal RNA by the RNA exosome (By similarity). May play a role during erythropoiesis (By similarity).</text>
</comment>
<comment type="subunit">
    <text evidence="1">Component of the small ribosomal subunit. Mature ribosomes consist of a small (40S) and a large (60S) subunit. The 40S subunit contains about 33 different proteins and 1 molecule of RNA (18S). The 60S subunit contains about 49 different proteins and 3 molecules of RNA (28S, 5.8S and 5S). Part of the small subunit (SSU) processome, composed of more than 70 proteins and the RNA chaperone small nucleolar RNA (snoRNA) U3.</text>
</comment>
<comment type="subcellular location">
    <subcellularLocation>
        <location evidence="2 3">Cytoplasm</location>
    </subcellularLocation>
    <subcellularLocation>
        <location evidence="2 3">Nucleus</location>
    </subcellularLocation>
    <subcellularLocation>
        <location evidence="1">Nucleus</location>
        <location evidence="1">Nucleolus</location>
    </subcellularLocation>
    <text evidence="2">Localized in cytoplasmic mRNP granules containing untranslated mRNAs.</text>
</comment>
<comment type="PTM">
    <text evidence="1">ADP-ribosylated at Tyr-155 by PARP1 in presence of HPF1.</text>
</comment>
<comment type="similarity">
    <text evidence="3">Belongs to the eukaryotic ribosomal protein eS1 family.</text>
</comment>
<reference key="1">
    <citation type="submission" date="2008-01" db="EMBL/GenBank/DDBJ databases">
        <title>NISC comparative sequencing initiative.</title>
        <authorList>
            <person name="Antonellis A."/>
            <person name="Ayele K."/>
            <person name="Benjamin B."/>
            <person name="Blakesley R.W."/>
            <person name="Boakye A."/>
            <person name="Bouffard G.G."/>
            <person name="Brinkley C."/>
            <person name="Brooks S."/>
            <person name="Chu G."/>
            <person name="Coleman H."/>
            <person name="Engle J."/>
            <person name="Gestole M."/>
            <person name="Greene A."/>
            <person name="Guan X."/>
            <person name="Gupta J."/>
            <person name="Haghighi P."/>
            <person name="Han J."/>
            <person name="Hansen N."/>
            <person name="Ho S.-L."/>
            <person name="Hu P."/>
            <person name="Hunter G."/>
            <person name="Hurle B."/>
            <person name="Idol J.R."/>
            <person name="Kwong P."/>
            <person name="Laric P."/>
            <person name="Larson S."/>
            <person name="Lee-Lin S.-Q."/>
            <person name="Legaspi R."/>
            <person name="Madden M."/>
            <person name="Maduro Q.L."/>
            <person name="Maduro V.B."/>
            <person name="Margulies E.H."/>
            <person name="Masiello C."/>
            <person name="Maskeri B."/>
            <person name="McDowell J."/>
            <person name="Mojidi H.A."/>
            <person name="Mullikin J.C."/>
            <person name="Oestreicher J.S."/>
            <person name="Park M."/>
            <person name="Portnoy M.E."/>
            <person name="Prasad A."/>
            <person name="Puri O."/>
            <person name="Reddix-Dugue N."/>
            <person name="Schandler K."/>
            <person name="Schueler M.G."/>
            <person name="Sison C."/>
            <person name="Stantripop S."/>
            <person name="Stephen E."/>
            <person name="Taye A."/>
            <person name="Thomas J.W."/>
            <person name="Thomas P.J."/>
            <person name="Tsipouri V."/>
            <person name="Ung L."/>
            <person name="Vogt J.L."/>
            <person name="Wetherby K.D."/>
            <person name="Young A."/>
            <person name="Green E.D."/>
        </authorList>
    </citation>
    <scope>NUCLEOTIDE SEQUENCE [LARGE SCALE GENOMIC DNA]</scope>
</reference>